<accession>Q9T0J6</accession>
<accession>F4JUH9</accession>
<accession>Q8GX38</accession>
<organism>
    <name type="scientific">Arabidopsis thaliana</name>
    <name type="common">Mouse-ear cress</name>
    <dbReference type="NCBI Taxonomy" id="3702"/>
    <lineage>
        <taxon>Eukaryota</taxon>
        <taxon>Viridiplantae</taxon>
        <taxon>Streptophyta</taxon>
        <taxon>Embryophyta</taxon>
        <taxon>Tracheophyta</taxon>
        <taxon>Spermatophyta</taxon>
        <taxon>Magnoliopsida</taxon>
        <taxon>eudicotyledons</taxon>
        <taxon>Gunneridae</taxon>
        <taxon>Pentapetalae</taxon>
        <taxon>rosids</taxon>
        <taxon>malvids</taxon>
        <taxon>Brassicales</taxon>
        <taxon>Brassicaceae</taxon>
        <taxon>Camelineae</taxon>
        <taxon>Arabidopsis</taxon>
    </lineage>
</organism>
<sequence>MSDVIAEHAVDTSVEGDAKAALPVQSTKQFSVYEATSEELIERSMAPIKKEFLCPPPPSRSVKQNDAADVRAPQSGLVQEKKSKRQLKRERREQSTINLCPQVARTEDVDSCQYKDKCRFNHDIEAFKAQKADDIEGQCPFVASGMKCAYGLSCRFLGSHRDITGNSDDKEKSEMNFFNKETQRLLWKNKMTFTNADAKLKSLGLLGHAKKSNAAEEITAEKTQNGMNGTQATEVAVDSAVSSEHTSEMIQDVDIPGPLETEEVRPMKKAKSEDQKNSKTGDVGGVYDGVKLEEETKKNGYPTSKANVEDEDSIKIVETDSSLKLHPREKKKLIDFRDKLYLAPLTTVGNLPFRRLCKVLGADVTCGEMAMCTNLLQGQASEWALLRRHSSEDLFGVQICGSYPDTVSRVVELIDRECTVDFIDINMGCPIDMVVNKSAGSALLNKPLRMKNIVEVSSSIVETPITIKVRTAFFEGKNRIDSLIADIGNWGATAVTIHGRSRQQRYSKSADWDYIYQCTKNATTNLQVIGNGDVYSYLDWNKHKSDCPELSSCMIARGALIKPWIFTEIKEQRHWDITSGERLNIMKDFVRFGLQHWGSDTKGVETTRHFLLEWLSYTFRYIPVGLLDVIPQQINWRPPSYFGRDDLETLMMSESAGDWVRISEMLLGKVPEGFTFAPKHKSNAYDRAENG</sequence>
<protein>
    <recommendedName>
        <fullName>tRNA-dihydrouridine(47) synthase [NAD(P)(+)]-like</fullName>
        <ecNumber evidence="1">1.3.1.89</ecNumber>
    </recommendedName>
    <alternativeName>
        <fullName>Zinc finger CCCH domain-containing protein 50</fullName>
        <shortName>AtC3H50</shortName>
    </alternativeName>
    <alternativeName>
        <fullName>mRNA-dihydrouridine synthase DUS3 homolog</fullName>
        <ecNumber evidence="3">1.3.1.-</ecNumber>
    </alternativeName>
    <alternativeName>
        <fullName>tRNA-dihydrouridine synthase 3-like</fullName>
    </alternativeName>
</protein>
<evidence type="ECO:0000250" key="1">
    <source>
        <dbReference type="UniProtKB" id="Q06053"/>
    </source>
</evidence>
<evidence type="ECO:0000250" key="2">
    <source>
        <dbReference type="UniProtKB" id="Q5SMC7"/>
    </source>
</evidence>
<evidence type="ECO:0000250" key="3">
    <source>
        <dbReference type="UniProtKB" id="Q9UTH9"/>
    </source>
</evidence>
<evidence type="ECO:0000255" key="4">
    <source>
        <dbReference type="PROSITE-ProRule" id="PRU00723"/>
    </source>
</evidence>
<evidence type="ECO:0000256" key="5">
    <source>
        <dbReference type="SAM" id="MobiDB-lite"/>
    </source>
</evidence>
<evidence type="ECO:0000305" key="6"/>
<evidence type="ECO:0007744" key="7">
    <source>
    </source>
</evidence>
<proteinExistence type="evidence at protein level"/>
<name>DUS3L_ARATH</name>
<comment type="function">
    <text evidence="1 3">Catalyzes the synthesis of dihydrouridine, a modified base found in the D-loop of most tRNAs. Specifically modifies U47 in cytoplasmic tRNAs (By similarity). Catalyzes the synthesis of dihydrouridine in some mRNAs, thereby affecting their translation (By similarity).</text>
</comment>
<comment type="catalytic activity">
    <reaction evidence="1">
        <text>5,6-dihydrouridine(47) in tRNA + NAD(+) = uridine(47) in tRNA + NADH + H(+)</text>
        <dbReference type="Rhea" id="RHEA:53364"/>
        <dbReference type="Rhea" id="RHEA-COMP:13539"/>
        <dbReference type="Rhea" id="RHEA-COMP:13540"/>
        <dbReference type="ChEBI" id="CHEBI:15378"/>
        <dbReference type="ChEBI" id="CHEBI:57540"/>
        <dbReference type="ChEBI" id="CHEBI:57945"/>
        <dbReference type="ChEBI" id="CHEBI:65315"/>
        <dbReference type="ChEBI" id="CHEBI:74443"/>
        <dbReference type="EC" id="1.3.1.89"/>
    </reaction>
    <physiologicalReaction direction="right-to-left" evidence="1">
        <dbReference type="Rhea" id="RHEA:53366"/>
    </physiologicalReaction>
</comment>
<comment type="catalytic activity">
    <reaction evidence="1">
        <text>5,6-dihydrouridine(47) in tRNA + NADP(+) = uridine(47) in tRNA + NADPH + H(+)</text>
        <dbReference type="Rhea" id="RHEA:53360"/>
        <dbReference type="Rhea" id="RHEA-COMP:13539"/>
        <dbReference type="Rhea" id="RHEA-COMP:13540"/>
        <dbReference type="ChEBI" id="CHEBI:15378"/>
        <dbReference type="ChEBI" id="CHEBI:57783"/>
        <dbReference type="ChEBI" id="CHEBI:58349"/>
        <dbReference type="ChEBI" id="CHEBI:65315"/>
        <dbReference type="ChEBI" id="CHEBI:74443"/>
        <dbReference type="EC" id="1.3.1.89"/>
    </reaction>
    <physiologicalReaction direction="right-to-left" evidence="1">
        <dbReference type="Rhea" id="RHEA:53362"/>
    </physiologicalReaction>
</comment>
<comment type="catalytic activity">
    <reaction evidence="3">
        <text>a 5,6-dihydrouridine in mRNA + NAD(+) = a uridine in mRNA + NADH + H(+)</text>
        <dbReference type="Rhea" id="RHEA:69851"/>
        <dbReference type="Rhea" id="RHEA-COMP:14658"/>
        <dbReference type="Rhea" id="RHEA-COMP:17789"/>
        <dbReference type="ChEBI" id="CHEBI:15378"/>
        <dbReference type="ChEBI" id="CHEBI:57540"/>
        <dbReference type="ChEBI" id="CHEBI:57945"/>
        <dbReference type="ChEBI" id="CHEBI:65315"/>
        <dbReference type="ChEBI" id="CHEBI:74443"/>
    </reaction>
    <physiologicalReaction direction="right-to-left" evidence="3">
        <dbReference type="Rhea" id="RHEA:69853"/>
    </physiologicalReaction>
</comment>
<comment type="catalytic activity">
    <reaction evidence="3">
        <text>a 5,6-dihydrouridine in mRNA + NADP(+) = a uridine in mRNA + NADPH + H(+)</text>
        <dbReference type="Rhea" id="RHEA:69855"/>
        <dbReference type="Rhea" id="RHEA-COMP:14658"/>
        <dbReference type="Rhea" id="RHEA-COMP:17789"/>
        <dbReference type="ChEBI" id="CHEBI:15378"/>
        <dbReference type="ChEBI" id="CHEBI:57783"/>
        <dbReference type="ChEBI" id="CHEBI:58349"/>
        <dbReference type="ChEBI" id="CHEBI:65315"/>
        <dbReference type="ChEBI" id="CHEBI:74443"/>
    </reaction>
    <physiologicalReaction direction="right-to-left" evidence="3">
        <dbReference type="Rhea" id="RHEA:69857"/>
    </physiologicalReaction>
</comment>
<comment type="cofactor">
    <cofactor evidence="2">
        <name>FMN</name>
        <dbReference type="ChEBI" id="CHEBI:58210"/>
    </cofactor>
</comment>
<comment type="similarity">
    <text evidence="6">Belongs to the Dus family. Dus3 subfamily.</text>
</comment>
<comment type="sequence caution" evidence="6">
    <conflict type="erroneous initiation">
        <sequence resource="EMBL-CDS" id="BAC43063"/>
    </conflict>
    <text>Truncated N-terminus.</text>
</comment>
<comment type="sequence caution" evidence="6">
    <conflict type="erroneous gene model prediction">
        <sequence resource="EMBL-CDS" id="CAB38623"/>
    </conflict>
</comment>
<comment type="sequence caution" evidence="6">
    <conflict type="erroneous gene model prediction">
        <sequence resource="EMBL-CDS" id="CAB80552"/>
    </conflict>
</comment>
<gene>
    <name type="ordered locus">At4g38890</name>
    <name type="ORF">F19H22.4</name>
</gene>
<keyword id="KW-0007">Acetylation</keyword>
<keyword id="KW-0285">Flavoprotein</keyword>
<keyword id="KW-0288">FMN</keyword>
<keyword id="KW-0479">Metal-binding</keyword>
<keyword id="KW-0507">mRNA processing</keyword>
<keyword id="KW-0520">NAD</keyword>
<keyword id="KW-0521">NADP</keyword>
<keyword id="KW-0560">Oxidoreductase</keyword>
<keyword id="KW-1185">Reference proteome</keyword>
<keyword id="KW-0677">Repeat</keyword>
<keyword id="KW-0819">tRNA processing</keyword>
<keyword id="KW-0862">Zinc</keyword>
<keyword id="KW-0863">Zinc-finger</keyword>
<dbReference type="EC" id="1.3.1.89" evidence="1"/>
<dbReference type="EC" id="1.3.1.-" evidence="3"/>
<dbReference type="EMBL" id="AL035656">
    <property type="protein sequence ID" value="CAB38623.1"/>
    <property type="status" value="ALT_SEQ"/>
    <property type="molecule type" value="Genomic_DNA"/>
</dbReference>
<dbReference type="EMBL" id="AL161594">
    <property type="protein sequence ID" value="CAB80552.1"/>
    <property type="status" value="ALT_SEQ"/>
    <property type="molecule type" value="Genomic_DNA"/>
</dbReference>
<dbReference type="EMBL" id="CP002687">
    <property type="protein sequence ID" value="AEE86987.1"/>
    <property type="molecule type" value="Genomic_DNA"/>
</dbReference>
<dbReference type="EMBL" id="AK118455">
    <property type="protein sequence ID" value="BAC43063.1"/>
    <property type="status" value="ALT_INIT"/>
    <property type="molecule type" value="mRNA"/>
</dbReference>
<dbReference type="EMBL" id="BT006228">
    <property type="protein sequence ID" value="AAP12877.1"/>
    <property type="molecule type" value="mRNA"/>
</dbReference>
<dbReference type="PIR" id="T06088">
    <property type="entry name" value="T06088"/>
</dbReference>
<dbReference type="RefSeq" id="NP_195600.2">
    <property type="nucleotide sequence ID" value="NM_120049.4"/>
</dbReference>
<dbReference type="SMR" id="Q9T0J6"/>
<dbReference type="FunCoup" id="Q9T0J6">
    <property type="interactions" value="4045"/>
</dbReference>
<dbReference type="STRING" id="3702.Q9T0J6"/>
<dbReference type="iPTMnet" id="Q9T0J6"/>
<dbReference type="PaxDb" id="3702-AT4G38890.1"/>
<dbReference type="ProteomicsDB" id="224283"/>
<dbReference type="EnsemblPlants" id="AT4G38890.1">
    <property type="protein sequence ID" value="AT4G38890.1"/>
    <property type="gene ID" value="AT4G38890"/>
</dbReference>
<dbReference type="GeneID" id="830044"/>
<dbReference type="Gramene" id="AT4G38890.1">
    <property type="protein sequence ID" value="AT4G38890.1"/>
    <property type="gene ID" value="AT4G38890"/>
</dbReference>
<dbReference type="KEGG" id="ath:AT4G38890"/>
<dbReference type="Araport" id="AT4G38890"/>
<dbReference type="TAIR" id="AT4G38890"/>
<dbReference type="eggNOG" id="KOG2333">
    <property type="taxonomic scope" value="Eukaryota"/>
</dbReference>
<dbReference type="HOGENOM" id="CLU_013299_7_3_1"/>
<dbReference type="InParanoid" id="Q9T0J6"/>
<dbReference type="OMA" id="WSYIAEC"/>
<dbReference type="PRO" id="PR:Q9T0J6"/>
<dbReference type="Proteomes" id="UP000006548">
    <property type="component" value="Chromosome 4"/>
</dbReference>
<dbReference type="ExpressionAtlas" id="Q9T0J6">
    <property type="expression patterns" value="baseline and differential"/>
</dbReference>
<dbReference type="GO" id="GO:0005773">
    <property type="term" value="C:vacuole"/>
    <property type="evidence" value="ECO:0007005"/>
    <property type="project" value="TAIR"/>
</dbReference>
<dbReference type="GO" id="GO:0050660">
    <property type="term" value="F:flavin adenine dinucleotide binding"/>
    <property type="evidence" value="ECO:0007669"/>
    <property type="project" value="InterPro"/>
</dbReference>
<dbReference type="GO" id="GO:0106414">
    <property type="term" value="F:mRNA dihydrouridine synthase activity"/>
    <property type="evidence" value="ECO:0007669"/>
    <property type="project" value="RHEA"/>
</dbReference>
<dbReference type="GO" id="GO:0017150">
    <property type="term" value="F:tRNA dihydrouridine synthase activity"/>
    <property type="evidence" value="ECO:0007669"/>
    <property type="project" value="InterPro"/>
</dbReference>
<dbReference type="GO" id="GO:0008270">
    <property type="term" value="F:zinc ion binding"/>
    <property type="evidence" value="ECO:0007669"/>
    <property type="project" value="UniProtKB-KW"/>
</dbReference>
<dbReference type="GO" id="GO:0006397">
    <property type="term" value="P:mRNA processing"/>
    <property type="evidence" value="ECO:0007669"/>
    <property type="project" value="UniProtKB-KW"/>
</dbReference>
<dbReference type="CDD" id="cd02801">
    <property type="entry name" value="DUS_like_FMN"/>
    <property type="match status" value="1"/>
</dbReference>
<dbReference type="FunFam" id="3.20.20.70:FF:000067">
    <property type="entry name" value="tRNA-dihydrouridine(47) synthase [NAD(P)(+)]"/>
    <property type="match status" value="1"/>
</dbReference>
<dbReference type="FunFam" id="4.10.1000.10:FF:000029">
    <property type="entry name" value="tRNA-dihydrouridine(47) synthase [NAD(P)(+)]"/>
    <property type="match status" value="1"/>
</dbReference>
<dbReference type="Gene3D" id="3.20.20.70">
    <property type="entry name" value="Aldolase class I"/>
    <property type="match status" value="1"/>
</dbReference>
<dbReference type="Gene3D" id="4.10.1000.10">
    <property type="entry name" value="Zinc finger, CCCH-type"/>
    <property type="match status" value="1"/>
</dbReference>
<dbReference type="InterPro" id="IPR013785">
    <property type="entry name" value="Aldolase_TIM"/>
</dbReference>
<dbReference type="InterPro" id="IPR035587">
    <property type="entry name" value="DUS-like_FMN-bd"/>
</dbReference>
<dbReference type="InterPro" id="IPR018517">
    <property type="entry name" value="tRNA_hU_synthase_CS"/>
</dbReference>
<dbReference type="InterPro" id="IPR000571">
    <property type="entry name" value="Znf_CCCH"/>
</dbReference>
<dbReference type="PANTHER" id="PTHR45846">
    <property type="entry name" value="TRNA-DIHYDROURIDINE(47) SYNTHASE [NAD(P)(+)]-LIKE"/>
    <property type="match status" value="1"/>
</dbReference>
<dbReference type="PANTHER" id="PTHR45846:SF1">
    <property type="entry name" value="TRNA-DIHYDROURIDINE(47) SYNTHASE [NAD(P)(+)]-LIKE"/>
    <property type="match status" value="1"/>
</dbReference>
<dbReference type="Pfam" id="PF01207">
    <property type="entry name" value="Dus"/>
    <property type="match status" value="1"/>
</dbReference>
<dbReference type="SUPFAM" id="SSF51395">
    <property type="entry name" value="FMN-linked oxidoreductases"/>
    <property type="match status" value="1"/>
</dbReference>
<dbReference type="PROSITE" id="PS01136">
    <property type="entry name" value="UPF0034"/>
    <property type="match status" value="1"/>
</dbReference>
<dbReference type="PROSITE" id="PS50103">
    <property type="entry name" value="ZF_C3H1"/>
    <property type="match status" value="2"/>
</dbReference>
<reference key="1">
    <citation type="journal article" date="1999" name="Nature">
        <title>Sequence and analysis of chromosome 4 of the plant Arabidopsis thaliana.</title>
        <authorList>
            <person name="Mayer K.F.X."/>
            <person name="Schueller C."/>
            <person name="Wambutt R."/>
            <person name="Murphy G."/>
            <person name="Volckaert G."/>
            <person name="Pohl T."/>
            <person name="Duesterhoeft A."/>
            <person name="Stiekema W."/>
            <person name="Entian K.-D."/>
            <person name="Terryn N."/>
            <person name="Harris B."/>
            <person name="Ansorge W."/>
            <person name="Brandt P."/>
            <person name="Grivell L.A."/>
            <person name="Rieger M."/>
            <person name="Weichselgartner M."/>
            <person name="de Simone V."/>
            <person name="Obermaier B."/>
            <person name="Mache R."/>
            <person name="Mueller M."/>
            <person name="Kreis M."/>
            <person name="Delseny M."/>
            <person name="Puigdomenech P."/>
            <person name="Watson M."/>
            <person name="Schmidtheini T."/>
            <person name="Reichert B."/>
            <person name="Portetelle D."/>
            <person name="Perez-Alonso M."/>
            <person name="Boutry M."/>
            <person name="Bancroft I."/>
            <person name="Vos P."/>
            <person name="Hoheisel J."/>
            <person name="Zimmermann W."/>
            <person name="Wedler H."/>
            <person name="Ridley P."/>
            <person name="Langham S.-A."/>
            <person name="McCullagh B."/>
            <person name="Bilham L."/>
            <person name="Robben J."/>
            <person name="van der Schueren J."/>
            <person name="Grymonprez B."/>
            <person name="Chuang Y.-J."/>
            <person name="Vandenbussche F."/>
            <person name="Braeken M."/>
            <person name="Weltjens I."/>
            <person name="Voet M."/>
            <person name="Bastiaens I."/>
            <person name="Aert R."/>
            <person name="Defoor E."/>
            <person name="Weitzenegger T."/>
            <person name="Bothe G."/>
            <person name="Ramsperger U."/>
            <person name="Hilbert H."/>
            <person name="Braun M."/>
            <person name="Holzer E."/>
            <person name="Brandt A."/>
            <person name="Peters S."/>
            <person name="van Staveren M."/>
            <person name="Dirkse W."/>
            <person name="Mooijman P."/>
            <person name="Klein Lankhorst R."/>
            <person name="Rose M."/>
            <person name="Hauf J."/>
            <person name="Koetter P."/>
            <person name="Berneiser S."/>
            <person name="Hempel S."/>
            <person name="Feldpausch M."/>
            <person name="Lamberth S."/>
            <person name="Van den Daele H."/>
            <person name="De Keyser A."/>
            <person name="Buysshaert C."/>
            <person name="Gielen J."/>
            <person name="Villarroel R."/>
            <person name="De Clercq R."/>
            <person name="van Montagu M."/>
            <person name="Rogers J."/>
            <person name="Cronin A."/>
            <person name="Quail M.A."/>
            <person name="Bray-Allen S."/>
            <person name="Clark L."/>
            <person name="Doggett J."/>
            <person name="Hall S."/>
            <person name="Kay M."/>
            <person name="Lennard N."/>
            <person name="McLay K."/>
            <person name="Mayes R."/>
            <person name="Pettett A."/>
            <person name="Rajandream M.A."/>
            <person name="Lyne M."/>
            <person name="Benes V."/>
            <person name="Rechmann S."/>
            <person name="Borkova D."/>
            <person name="Bloecker H."/>
            <person name="Scharfe M."/>
            <person name="Grimm M."/>
            <person name="Loehnert T.-H."/>
            <person name="Dose S."/>
            <person name="de Haan M."/>
            <person name="Maarse A.C."/>
            <person name="Schaefer M."/>
            <person name="Mueller-Auer S."/>
            <person name="Gabel C."/>
            <person name="Fuchs M."/>
            <person name="Fartmann B."/>
            <person name="Granderath K."/>
            <person name="Dauner D."/>
            <person name="Herzl A."/>
            <person name="Neumann S."/>
            <person name="Argiriou A."/>
            <person name="Vitale D."/>
            <person name="Liguori R."/>
            <person name="Piravandi E."/>
            <person name="Massenet O."/>
            <person name="Quigley F."/>
            <person name="Clabauld G."/>
            <person name="Muendlein A."/>
            <person name="Felber R."/>
            <person name="Schnabl S."/>
            <person name="Hiller R."/>
            <person name="Schmidt W."/>
            <person name="Lecharny A."/>
            <person name="Aubourg S."/>
            <person name="Chefdor F."/>
            <person name="Cooke R."/>
            <person name="Berger C."/>
            <person name="Monfort A."/>
            <person name="Casacuberta E."/>
            <person name="Gibbons T."/>
            <person name="Weber N."/>
            <person name="Vandenbol M."/>
            <person name="Bargues M."/>
            <person name="Terol J."/>
            <person name="Torres A."/>
            <person name="Perez-Perez A."/>
            <person name="Purnelle B."/>
            <person name="Bent E."/>
            <person name="Johnson S."/>
            <person name="Tacon D."/>
            <person name="Jesse T."/>
            <person name="Heijnen L."/>
            <person name="Schwarz S."/>
            <person name="Scholler P."/>
            <person name="Heber S."/>
            <person name="Francs P."/>
            <person name="Bielke C."/>
            <person name="Frishman D."/>
            <person name="Haase D."/>
            <person name="Lemcke K."/>
            <person name="Mewes H.-W."/>
            <person name="Stocker S."/>
            <person name="Zaccaria P."/>
            <person name="Bevan M."/>
            <person name="Wilson R.K."/>
            <person name="de la Bastide M."/>
            <person name="Habermann K."/>
            <person name="Parnell L."/>
            <person name="Dedhia N."/>
            <person name="Gnoj L."/>
            <person name="Schutz K."/>
            <person name="Huang E."/>
            <person name="Spiegel L."/>
            <person name="Sekhon M."/>
            <person name="Murray J."/>
            <person name="Sheet P."/>
            <person name="Cordes M."/>
            <person name="Abu-Threideh J."/>
            <person name="Stoneking T."/>
            <person name="Kalicki J."/>
            <person name="Graves T."/>
            <person name="Harmon G."/>
            <person name="Edwards J."/>
            <person name="Latreille P."/>
            <person name="Courtney L."/>
            <person name="Cloud J."/>
            <person name="Abbott A."/>
            <person name="Scott K."/>
            <person name="Johnson D."/>
            <person name="Minx P."/>
            <person name="Bentley D."/>
            <person name="Fulton B."/>
            <person name="Miller N."/>
            <person name="Greco T."/>
            <person name="Kemp K."/>
            <person name="Kramer J."/>
            <person name="Fulton L."/>
            <person name="Mardis E."/>
            <person name="Dante M."/>
            <person name="Pepin K."/>
            <person name="Hillier L.W."/>
            <person name="Nelson J."/>
            <person name="Spieth J."/>
            <person name="Ryan E."/>
            <person name="Andrews S."/>
            <person name="Geisel C."/>
            <person name="Layman D."/>
            <person name="Du H."/>
            <person name="Ali J."/>
            <person name="Berghoff A."/>
            <person name="Jones K."/>
            <person name="Drone K."/>
            <person name="Cotton M."/>
            <person name="Joshu C."/>
            <person name="Antonoiu B."/>
            <person name="Zidanic M."/>
            <person name="Strong C."/>
            <person name="Sun H."/>
            <person name="Lamar B."/>
            <person name="Yordan C."/>
            <person name="Ma P."/>
            <person name="Zhong J."/>
            <person name="Preston R."/>
            <person name="Vil D."/>
            <person name="Shekher M."/>
            <person name="Matero A."/>
            <person name="Shah R."/>
            <person name="Swaby I.K."/>
            <person name="O'Shaughnessy A."/>
            <person name="Rodriguez M."/>
            <person name="Hoffman J."/>
            <person name="Till S."/>
            <person name="Granat S."/>
            <person name="Shohdy N."/>
            <person name="Hasegawa A."/>
            <person name="Hameed A."/>
            <person name="Lodhi M."/>
            <person name="Johnson A."/>
            <person name="Chen E."/>
            <person name="Marra M.A."/>
            <person name="Martienssen R."/>
            <person name="McCombie W.R."/>
        </authorList>
    </citation>
    <scope>NUCLEOTIDE SEQUENCE [LARGE SCALE GENOMIC DNA]</scope>
    <source>
        <strain>cv. Columbia</strain>
    </source>
</reference>
<reference key="2">
    <citation type="journal article" date="2017" name="Plant J.">
        <title>Araport11: a complete reannotation of the Arabidopsis thaliana reference genome.</title>
        <authorList>
            <person name="Cheng C.Y."/>
            <person name="Krishnakumar V."/>
            <person name="Chan A.P."/>
            <person name="Thibaud-Nissen F."/>
            <person name="Schobel S."/>
            <person name="Town C.D."/>
        </authorList>
    </citation>
    <scope>GENOME REANNOTATION</scope>
    <source>
        <strain>cv. Columbia</strain>
    </source>
</reference>
<reference key="3">
    <citation type="journal article" date="2002" name="Science">
        <title>Functional annotation of a full-length Arabidopsis cDNA collection.</title>
        <authorList>
            <person name="Seki M."/>
            <person name="Narusaka M."/>
            <person name="Kamiya A."/>
            <person name="Ishida J."/>
            <person name="Satou M."/>
            <person name="Sakurai T."/>
            <person name="Nakajima M."/>
            <person name="Enju A."/>
            <person name="Akiyama K."/>
            <person name="Oono Y."/>
            <person name="Muramatsu M."/>
            <person name="Hayashizaki Y."/>
            <person name="Kawai J."/>
            <person name="Carninci P."/>
            <person name="Itoh M."/>
            <person name="Ishii Y."/>
            <person name="Arakawa T."/>
            <person name="Shibata K."/>
            <person name="Shinagawa A."/>
            <person name="Shinozaki K."/>
        </authorList>
    </citation>
    <scope>NUCLEOTIDE SEQUENCE [LARGE SCALE MRNA] OF 416-691</scope>
    <source>
        <strain>cv. Columbia</strain>
    </source>
</reference>
<reference key="4">
    <citation type="journal article" date="2003" name="Science">
        <title>Empirical analysis of transcriptional activity in the Arabidopsis genome.</title>
        <authorList>
            <person name="Yamada K."/>
            <person name="Lim J."/>
            <person name="Dale J.M."/>
            <person name="Chen H."/>
            <person name="Shinn P."/>
            <person name="Palm C.J."/>
            <person name="Southwick A.M."/>
            <person name="Wu H.C."/>
            <person name="Kim C.J."/>
            <person name="Nguyen M."/>
            <person name="Pham P.K."/>
            <person name="Cheuk R.F."/>
            <person name="Karlin-Newmann G."/>
            <person name="Liu S.X."/>
            <person name="Lam B."/>
            <person name="Sakano H."/>
            <person name="Wu T."/>
            <person name="Yu G."/>
            <person name="Miranda M."/>
            <person name="Quach H.L."/>
            <person name="Tripp M."/>
            <person name="Chang C.H."/>
            <person name="Lee J.M."/>
            <person name="Toriumi M.J."/>
            <person name="Chan M.M."/>
            <person name="Tang C.C."/>
            <person name="Onodera C.S."/>
            <person name="Deng J.M."/>
            <person name="Akiyama K."/>
            <person name="Ansari Y."/>
            <person name="Arakawa T."/>
            <person name="Banh J."/>
            <person name="Banno F."/>
            <person name="Bowser L."/>
            <person name="Brooks S.Y."/>
            <person name="Carninci P."/>
            <person name="Chao Q."/>
            <person name="Choy N."/>
            <person name="Enju A."/>
            <person name="Goldsmith A.D."/>
            <person name="Gurjal M."/>
            <person name="Hansen N.F."/>
            <person name="Hayashizaki Y."/>
            <person name="Johnson-Hopson C."/>
            <person name="Hsuan V.W."/>
            <person name="Iida K."/>
            <person name="Karnes M."/>
            <person name="Khan S."/>
            <person name="Koesema E."/>
            <person name="Ishida J."/>
            <person name="Jiang P.X."/>
            <person name="Jones T."/>
            <person name="Kawai J."/>
            <person name="Kamiya A."/>
            <person name="Meyers C."/>
            <person name="Nakajima M."/>
            <person name="Narusaka M."/>
            <person name="Seki M."/>
            <person name="Sakurai T."/>
            <person name="Satou M."/>
            <person name="Tamse R."/>
            <person name="Vaysberg M."/>
            <person name="Wallender E.K."/>
            <person name="Wong C."/>
            <person name="Yamamura Y."/>
            <person name="Yuan S."/>
            <person name="Shinozaki K."/>
            <person name="Davis R.W."/>
            <person name="Theologis A."/>
            <person name="Ecker J.R."/>
        </authorList>
    </citation>
    <scope>NUCLEOTIDE SEQUENCE [LARGE SCALE MRNA] OF 427-691</scope>
    <source>
        <strain>cv. Columbia</strain>
    </source>
</reference>
<reference key="5">
    <citation type="journal article" date="2008" name="BMC Genomics">
        <title>Genome-wide analysis of CCCH zinc finger family in Arabidopsis and rice.</title>
        <authorList>
            <person name="Wang D."/>
            <person name="Guo Y."/>
            <person name="Wu C."/>
            <person name="Yang G."/>
            <person name="Li Y."/>
            <person name="Zheng C."/>
        </authorList>
    </citation>
    <scope>NOMENCLATURE</scope>
</reference>
<reference key="6">
    <citation type="journal article" date="2012" name="Mol. Cell. Proteomics">
        <title>Comparative large-scale characterisation of plant vs. mammal proteins reveals similar and idiosyncratic N-alpha acetylation features.</title>
        <authorList>
            <person name="Bienvenut W.V."/>
            <person name="Sumpton D."/>
            <person name="Martinez A."/>
            <person name="Lilla S."/>
            <person name="Espagne C."/>
            <person name="Meinnel T."/>
            <person name="Giglione C."/>
        </authorList>
    </citation>
    <scope>ACETYLATION [LARGE SCALE ANALYSIS] AT SER-2</scope>
    <scope>CLEAVAGE OF INITIATOR METHIONINE [LARGE SCALE ANALYSIS]</scope>
    <scope>IDENTIFICATION BY MASS SPECTROMETRY [LARGE SCALE ANALYSIS]</scope>
</reference>
<feature type="initiator methionine" description="Removed" evidence="7">
    <location>
        <position position="1"/>
    </location>
</feature>
<feature type="chain" id="PRO_0000371960" description="tRNA-dihydrouridine(47) synthase [NAD(P)(+)]-like">
    <location>
        <begin position="2"/>
        <end position="691"/>
    </location>
</feature>
<feature type="zinc finger region" description="C3H1-type 1" evidence="4">
    <location>
        <begin position="94"/>
        <end position="125"/>
    </location>
</feature>
<feature type="zinc finger region" description="C3H1-type 2" evidence="4">
    <location>
        <begin position="138"/>
        <end position="163"/>
    </location>
</feature>
<feature type="region of interest" description="Disordered" evidence="5">
    <location>
        <begin position="55"/>
        <end position="94"/>
    </location>
</feature>
<feature type="region of interest" description="Disordered" evidence="5">
    <location>
        <begin position="259"/>
        <end position="286"/>
    </location>
</feature>
<feature type="compositionally biased region" description="Basic and acidic residues" evidence="5">
    <location>
        <begin position="262"/>
        <end position="279"/>
    </location>
</feature>
<feature type="active site" description="Proton donor" evidence="2">
    <location>
        <position position="429"/>
    </location>
</feature>
<feature type="binding site" evidence="2">
    <location>
        <begin position="344"/>
        <end position="346"/>
    </location>
    <ligand>
        <name>FMN</name>
        <dbReference type="ChEBI" id="CHEBI:58210"/>
    </ligand>
</feature>
<feature type="binding site" evidence="2">
    <location>
        <position position="398"/>
    </location>
    <ligand>
        <name>FMN</name>
        <dbReference type="ChEBI" id="CHEBI:58210"/>
    </ligand>
</feature>
<feature type="binding site" evidence="2">
    <location>
        <position position="468"/>
    </location>
    <ligand>
        <name>FMN</name>
        <dbReference type="ChEBI" id="CHEBI:58210"/>
    </ligand>
</feature>
<feature type="binding site" evidence="2">
    <location>
        <position position="498"/>
    </location>
    <ligand>
        <name>FMN</name>
        <dbReference type="ChEBI" id="CHEBI:58210"/>
    </ligand>
</feature>
<feature type="binding site" evidence="2">
    <location>
        <begin position="531"/>
        <end position="533"/>
    </location>
    <ligand>
        <name>FMN</name>
        <dbReference type="ChEBI" id="CHEBI:58210"/>
    </ligand>
</feature>
<feature type="binding site" evidence="2">
    <location>
        <begin position="556"/>
        <end position="557"/>
    </location>
    <ligand>
        <name>FMN</name>
        <dbReference type="ChEBI" id="CHEBI:58210"/>
    </ligand>
</feature>
<feature type="modified residue" description="N-acetylserine" evidence="7">
    <location>
        <position position="2"/>
    </location>
</feature>